<evidence type="ECO:0000255" key="1">
    <source>
        <dbReference type="HAMAP-Rule" id="MF_00169"/>
    </source>
</evidence>
<feature type="chain" id="PRO_1000097622" description="3-dehydroquinate dehydratase">
    <location>
        <begin position="1"/>
        <end position="150"/>
    </location>
</feature>
<feature type="active site" description="Proton acceptor" evidence="1">
    <location>
        <position position="26"/>
    </location>
</feature>
<feature type="active site" description="Proton donor" evidence="1">
    <location>
        <position position="101"/>
    </location>
</feature>
<feature type="binding site" evidence="1">
    <location>
        <position position="75"/>
    </location>
    <ligand>
        <name>substrate</name>
    </ligand>
</feature>
<feature type="binding site" evidence="1">
    <location>
        <position position="81"/>
    </location>
    <ligand>
        <name>substrate</name>
    </ligand>
</feature>
<feature type="binding site" evidence="1">
    <location>
        <position position="88"/>
    </location>
    <ligand>
        <name>substrate</name>
    </ligand>
</feature>
<feature type="binding site" evidence="1">
    <location>
        <begin position="102"/>
        <end position="103"/>
    </location>
    <ligand>
        <name>substrate</name>
    </ligand>
</feature>
<feature type="binding site" evidence="1">
    <location>
        <position position="112"/>
    </location>
    <ligand>
        <name>substrate</name>
    </ligand>
</feature>
<feature type="site" description="Transition state stabilizer" evidence="1">
    <location>
        <position position="21"/>
    </location>
</feature>
<accession>A3QID1</accession>
<reference key="1">
    <citation type="submission" date="2007-03" db="EMBL/GenBank/DDBJ databases">
        <title>Complete sequence of Shewanella loihica PV-4.</title>
        <authorList>
            <consortium name="US DOE Joint Genome Institute"/>
            <person name="Copeland A."/>
            <person name="Lucas S."/>
            <person name="Lapidus A."/>
            <person name="Barry K."/>
            <person name="Detter J.C."/>
            <person name="Glavina del Rio T."/>
            <person name="Hammon N."/>
            <person name="Israni S."/>
            <person name="Dalin E."/>
            <person name="Tice H."/>
            <person name="Pitluck S."/>
            <person name="Chain P."/>
            <person name="Malfatti S."/>
            <person name="Shin M."/>
            <person name="Vergez L."/>
            <person name="Schmutz J."/>
            <person name="Larimer F."/>
            <person name="Land M."/>
            <person name="Hauser L."/>
            <person name="Kyrpides N."/>
            <person name="Mikhailova N."/>
            <person name="Romine M.F."/>
            <person name="Serres G."/>
            <person name="Fredrickson J."/>
            <person name="Tiedje J."/>
            <person name="Richardson P."/>
        </authorList>
    </citation>
    <scope>NUCLEOTIDE SEQUENCE [LARGE SCALE GENOMIC DNA]</scope>
    <source>
        <strain>ATCC BAA-1088 / PV-4</strain>
    </source>
</reference>
<comment type="function">
    <text evidence="1">Catalyzes a trans-dehydration via an enolate intermediate.</text>
</comment>
<comment type="catalytic activity">
    <reaction evidence="1">
        <text>3-dehydroquinate = 3-dehydroshikimate + H2O</text>
        <dbReference type="Rhea" id="RHEA:21096"/>
        <dbReference type="ChEBI" id="CHEBI:15377"/>
        <dbReference type="ChEBI" id="CHEBI:16630"/>
        <dbReference type="ChEBI" id="CHEBI:32364"/>
        <dbReference type="EC" id="4.2.1.10"/>
    </reaction>
</comment>
<comment type="pathway">
    <text evidence="1">Metabolic intermediate biosynthesis; chorismate biosynthesis; chorismate from D-erythrose 4-phosphate and phosphoenolpyruvate: step 3/7.</text>
</comment>
<comment type="subunit">
    <text evidence="1">Homododecamer.</text>
</comment>
<comment type="similarity">
    <text evidence="1">Belongs to the type-II 3-dehydroquinase family.</text>
</comment>
<sequence length="150" mass="16387">MSKAVKILLVNGPNLNLLGRREPGHYGHHTLAQIVEQLKLLAGEQGASLDHIQSNAEHELIDAIHQSDADFIIINPAAFTHTSVALRDALLGVAIPFIEVHLSNVHAREAFRHHSYFSDKAVGVICGLGEQGYRYALDSAIARVRAAQEK</sequence>
<organism>
    <name type="scientific">Shewanella loihica (strain ATCC BAA-1088 / PV-4)</name>
    <dbReference type="NCBI Taxonomy" id="323850"/>
    <lineage>
        <taxon>Bacteria</taxon>
        <taxon>Pseudomonadati</taxon>
        <taxon>Pseudomonadota</taxon>
        <taxon>Gammaproteobacteria</taxon>
        <taxon>Alteromonadales</taxon>
        <taxon>Shewanellaceae</taxon>
        <taxon>Shewanella</taxon>
    </lineage>
</organism>
<dbReference type="EC" id="4.2.1.10" evidence="1"/>
<dbReference type="EMBL" id="CP000606">
    <property type="protein sequence ID" value="ABO25229.1"/>
    <property type="molecule type" value="Genomic_DNA"/>
</dbReference>
<dbReference type="RefSeq" id="WP_011867159.1">
    <property type="nucleotide sequence ID" value="NC_009092.1"/>
</dbReference>
<dbReference type="SMR" id="A3QID1"/>
<dbReference type="STRING" id="323850.Shew_3363"/>
<dbReference type="KEGG" id="slo:Shew_3363"/>
<dbReference type="eggNOG" id="COG0757">
    <property type="taxonomic scope" value="Bacteria"/>
</dbReference>
<dbReference type="HOGENOM" id="CLU_090968_1_0_6"/>
<dbReference type="OrthoDB" id="9790793at2"/>
<dbReference type="UniPathway" id="UPA00053">
    <property type="reaction ID" value="UER00086"/>
</dbReference>
<dbReference type="Proteomes" id="UP000001558">
    <property type="component" value="Chromosome"/>
</dbReference>
<dbReference type="GO" id="GO:0003855">
    <property type="term" value="F:3-dehydroquinate dehydratase activity"/>
    <property type="evidence" value="ECO:0007669"/>
    <property type="project" value="UniProtKB-UniRule"/>
</dbReference>
<dbReference type="GO" id="GO:0008652">
    <property type="term" value="P:amino acid biosynthetic process"/>
    <property type="evidence" value="ECO:0007669"/>
    <property type="project" value="UniProtKB-KW"/>
</dbReference>
<dbReference type="GO" id="GO:0009073">
    <property type="term" value="P:aromatic amino acid family biosynthetic process"/>
    <property type="evidence" value="ECO:0007669"/>
    <property type="project" value="UniProtKB-KW"/>
</dbReference>
<dbReference type="GO" id="GO:0009423">
    <property type="term" value="P:chorismate biosynthetic process"/>
    <property type="evidence" value="ECO:0007669"/>
    <property type="project" value="UniProtKB-UniRule"/>
</dbReference>
<dbReference type="GO" id="GO:0019631">
    <property type="term" value="P:quinate catabolic process"/>
    <property type="evidence" value="ECO:0007669"/>
    <property type="project" value="TreeGrafter"/>
</dbReference>
<dbReference type="CDD" id="cd00466">
    <property type="entry name" value="DHQase_II"/>
    <property type="match status" value="1"/>
</dbReference>
<dbReference type="Gene3D" id="3.40.50.9100">
    <property type="entry name" value="Dehydroquinase, class II"/>
    <property type="match status" value="1"/>
</dbReference>
<dbReference type="HAMAP" id="MF_00169">
    <property type="entry name" value="AroQ"/>
    <property type="match status" value="1"/>
</dbReference>
<dbReference type="InterPro" id="IPR001874">
    <property type="entry name" value="DHquinase_II"/>
</dbReference>
<dbReference type="InterPro" id="IPR018509">
    <property type="entry name" value="DHquinase_II_CS"/>
</dbReference>
<dbReference type="InterPro" id="IPR036441">
    <property type="entry name" value="DHquinase_II_sf"/>
</dbReference>
<dbReference type="NCBIfam" id="TIGR01088">
    <property type="entry name" value="aroQ"/>
    <property type="match status" value="1"/>
</dbReference>
<dbReference type="NCBIfam" id="NF003804">
    <property type="entry name" value="PRK05395.1-1"/>
    <property type="match status" value="1"/>
</dbReference>
<dbReference type="NCBIfam" id="NF003805">
    <property type="entry name" value="PRK05395.1-2"/>
    <property type="match status" value="1"/>
</dbReference>
<dbReference type="NCBIfam" id="NF003806">
    <property type="entry name" value="PRK05395.1-3"/>
    <property type="match status" value="1"/>
</dbReference>
<dbReference type="NCBIfam" id="NF003807">
    <property type="entry name" value="PRK05395.1-4"/>
    <property type="match status" value="1"/>
</dbReference>
<dbReference type="PANTHER" id="PTHR21272">
    <property type="entry name" value="CATABOLIC 3-DEHYDROQUINASE"/>
    <property type="match status" value="1"/>
</dbReference>
<dbReference type="PANTHER" id="PTHR21272:SF3">
    <property type="entry name" value="CATABOLIC 3-DEHYDROQUINASE"/>
    <property type="match status" value="1"/>
</dbReference>
<dbReference type="Pfam" id="PF01220">
    <property type="entry name" value="DHquinase_II"/>
    <property type="match status" value="1"/>
</dbReference>
<dbReference type="PIRSF" id="PIRSF001399">
    <property type="entry name" value="DHquinase_II"/>
    <property type="match status" value="1"/>
</dbReference>
<dbReference type="SUPFAM" id="SSF52304">
    <property type="entry name" value="Type II 3-dehydroquinate dehydratase"/>
    <property type="match status" value="1"/>
</dbReference>
<dbReference type="PROSITE" id="PS01029">
    <property type="entry name" value="DEHYDROQUINASE_II"/>
    <property type="match status" value="1"/>
</dbReference>
<keyword id="KW-0028">Amino-acid biosynthesis</keyword>
<keyword id="KW-0057">Aromatic amino acid biosynthesis</keyword>
<keyword id="KW-0456">Lyase</keyword>
<keyword id="KW-1185">Reference proteome</keyword>
<protein>
    <recommendedName>
        <fullName evidence="1">3-dehydroquinate dehydratase</fullName>
        <shortName evidence="1">3-dehydroquinase</shortName>
        <ecNumber evidence="1">4.2.1.10</ecNumber>
    </recommendedName>
    <alternativeName>
        <fullName evidence="1">Type II DHQase</fullName>
    </alternativeName>
</protein>
<proteinExistence type="inferred from homology"/>
<gene>
    <name evidence="1" type="primary">aroQ</name>
    <name type="ordered locus">Shew_3363</name>
</gene>
<name>AROQ_SHELP</name>